<dbReference type="EMBL" id="AE002160">
    <property type="protein sequence ID" value="AAF39669.1"/>
    <property type="molecule type" value="Genomic_DNA"/>
</dbReference>
<dbReference type="PIR" id="D81656">
    <property type="entry name" value="D81656"/>
</dbReference>
<dbReference type="RefSeq" id="WP_010231811.1">
    <property type="nucleotide sequence ID" value="NZ_CP063055.1"/>
</dbReference>
<dbReference type="SMR" id="Q9PJF6"/>
<dbReference type="GeneID" id="1246241"/>
<dbReference type="KEGG" id="cmu:TC_0873"/>
<dbReference type="eggNOG" id="ENOG502ZXBB">
    <property type="taxonomic scope" value="Bacteria"/>
</dbReference>
<dbReference type="HOGENOM" id="CLU_1472715_0_0_0"/>
<dbReference type="OrthoDB" id="18350at2"/>
<dbReference type="Proteomes" id="UP000000800">
    <property type="component" value="Chromosome"/>
</dbReference>
<dbReference type="Gene3D" id="1.20.58.1050">
    <property type="match status" value="1"/>
</dbReference>
<dbReference type="Gene3D" id="6.10.250.1130">
    <property type="match status" value="1"/>
</dbReference>
<dbReference type="InterPro" id="IPR035397">
    <property type="entry name" value="CT_584-like"/>
</dbReference>
<dbReference type="Pfam" id="PF17435">
    <property type="entry name" value="CT_584-like"/>
    <property type="match status" value="1"/>
</dbReference>
<reference key="1">
    <citation type="journal article" date="2000" name="Nucleic Acids Res.">
        <title>Genome sequences of Chlamydia trachomatis MoPn and Chlamydia pneumoniae AR39.</title>
        <authorList>
            <person name="Read T.D."/>
            <person name="Brunham R.C."/>
            <person name="Shen C."/>
            <person name="Gill S.R."/>
            <person name="Heidelberg J.F."/>
            <person name="White O."/>
            <person name="Hickey E.K."/>
            <person name="Peterson J.D."/>
            <person name="Utterback T.R."/>
            <person name="Berry K.J."/>
            <person name="Bass S."/>
            <person name="Linher K.D."/>
            <person name="Weidman J.F."/>
            <person name="Khouri H.M."/>
            <person name="Craven B."/>
            <person name="Bowman C."/>
            <person name="Dodson R.J."/>
            <person name="Gwinn M.L."/>
            <person name="Nelson W.C."/>
            <person name="DeBoy R.T."/>
            <person name="Kolonay J.F."/>
            <person name="McClarty G."/>
            <person name="Salzberg S.L."/>
            <person name="Eisen J.A."/>
            <person name="Fraser C.M."/>
        </authorList>
    </citation>
    <scope>NUCLEOTIDE SEQUENCE [LARGE SCALE GENOMIC DNA]</scope>
    <source>
        <strain>MoPn / Nigg</strain>
    </source>
</reference>
<accession>Q9PJF6</accession>
<evidence type="ECO:0000305" key="1"/>
<comment type="similarity">
    <text evidence="1">Belongs to the chlamydial CPn_0803/CT_584/TC_0873 family.</text>
</comment>
<proteinExistence type="inferred from homology"/>
<protein>
    <recommendedName>
        <fullName>Uncharacterized protein TC_0873</fullName>
    </recommendedName>
</protein>
<organism>
    <name type="scientific">Chlamydia muridarum (strain MoPn / Nigg)</name>
    <dbReference type="NCBI Taxonomy" id="243161"/>
    <lineage>
        <taxon>Bacteria</taxon>
        <taxon>Pseudomonadati</taxon>
        <taxon>Chlamydiota</taxon>
        <taxon>Chlamydiia</taxon>
        <taxon>Chlamydiales</taxon>
        <taxon>Chlamydiaceae</taxon>
        <taxon>Chlamydia/Chlamydophila group</taxon>
        <taxon>Chlamydia</taxon>
    </lineage>
</organism>
<sequence>MTTKSKTLEIDNNTFLLLEGNLKRIFATPIGYTTFREFQNVIFNCAQGQQELANFLFEMLINGKLLQELPAGQKQSAQSLIVQFMMLIRVAKDIHERGEFINFITSDMLAQQERCVFLNRLSRVDGQEFLLMTDVQNTCHLIRHLLSRLLEAQKNPIGEKNLQEVQEDLDSLRAHFEELTKSM</sequence>
<gene>
    <name type="ordered locus">TC_0873</name>
</gene>
<name>Y873_CHLMU</name>
<feature type="chain" id="PRO_0000218427" description="Uncharacterized protein TC_0873">
    <location>
        <begin position="1"/>
        <end position="183"/>
    </location>
</feature>